<protein>
    <recommendedName>
        <fullName evidence="1">Circadian clock oscillator protein KaiB</fullName>
    </recommendedName>
</protein>
<feature type="chain" id="PRO_1000070459" description="Circadian clock oscillator protein KaiB">
    <location>
        <begin position="1"/>
        <end position="105"/>
    </location>
</feature>
<gene>
    <name evidence="1" type="primary">kaiB</name>
    <name type="ordered locus">PMT9312_1441</name>
</gene>
<dbReference type="EMBL" id="CP000111">
    <property type="protein sequence ID" value="ABB50501.1"/>
    <property type="molecule type" value="Genomic_DNA"/>
</dbReference>
<dbReference type="RefSeq" id="WP_011376985.1">
    <property type="nucleotide sequence ID" value="NC_007577.1"/>
</dbReference>
<dbReference type="SMR" id="Q319E4"/>
<dbReference type="STRING" id="74546.PMT9312_1441"/>
<dbReference type="KEGG" id="pmi:PMT9312_1441"/>
<dbReference type="eggNOG" id="COG4251">
    <property type="taxonomic scope" value="Bacteria"/>
</dbReference>
<dbReference type="HOGENOM" id="CLU_144073_0_0_3"/>
<dbReference type="OrthoDB" id="5458519at2"/>
<dbReference type="Proteomes" id="UP000002715">
    <property type="component" value="Chromosome"/>
</dbReference>
<dbReference type="GO" id="GO:0007623">
    <property type="term" value="P:circadian rhythm"/>
    <property type="evidence" value="ECO:0007669"/>
    <property type="project" value="UniProtKB-UniRule"/>
</dbReference>
<dbReference type="CDD" id="cd02978">
    <property type="entry name" value="KaiB_like"/>
    <property type="match status" value="1"/>
</dbReference>
<dbReference type="Gene3D" id="3.40.30.10">
    <property type="entry name" value="Glutaredoxin"/>
    <property type="match status" value="1"/>
</dbReference>
<dbReference type="HAMAP" id="MF_01835">
    <property type="entry name" value="KaiB"/>
    <property type="match status" value="1"/>
</dbReference>
<dbReference type="InterPro" id="IPR013474">
    <property type="entry name" value="Circ_KaiB"/>
</dbReference>
<dbReference type="InterPro" id="IPR039022">
    <property type="entry name" value="KaiB-like"/>
</dbReference>
<dbReference type="InterPro" id="IPR011649">
    <property type="entry name" value="KaiB_domain"/>
</dbReference>
<dbReference type="InterPro" id="IPR036249">
    <property type="entry name" value="Thioredoxin-like_sf"/>
</dbReference>
<dbReference type="NCBIfam" id="TIGR02654">
    <property type="entry name" value="circ_KaiB"/>
    <property type="match status" value="1"/>
</dbReference>
<dbReference type="NCBIfam" id="NF006798">
    <property type="entry name" value="PRK09301.1"/>
    <property type="match status" value="1"/>
</dbReference>
<dbReference type="PANTHER" id="PTHR41709:SF2">
    <property type="entry name" value="CIRCADIAN CLOCK PROTEIN KAIB2"/>
    <property type="match status" value="1"/>
</dbReference>
<dbReference type="PANTHER" id="PTHR41709">
    <property type="entry name" value="KAIB-LIKE PROTEIN 1"/>
    <property type="match status" value="1"/>
</dbReference>
<dbReference type="Pfam" id="PF07689">
    <property type="entry name" value="KaiB"/>
    <property type="match status" value="1"/>
</dbReference>
<dbReference type="SMART" id="SM01248">
    <property type="entry name" value="KaiB"/>
    <property type="match status" value="1"/>
</dbReference>
<dbReference type="SUPFAM" id="SSF52833">
    <property type="entry name" value="Thioredoxin-like"/>
    <property type="match status" value="1"/>
</dbReference>
<keyword id="KW-0090">Biological rhythms</keyword>
<organism>
    <name type="scientific">Prochlorococcus marinus (strain MIT 9312)</name>
    <dbReference type="NCBI Taxonomy" id="74546"/>
    <lineage>
        <taxon>Bacteria</taxon>
        <taxon>Bacillati</taxon>
        <taxon>Cyanobacteriota</taxon>
        <taxon>Cyanophyceae</taxon>
        <taxon>Synechococcales</taxon>
        <taxon>Prochlorococcaceae</taxon>
        <taxon>Prochlorococcus</taxon>
    </lineage>
</organism>
<name>KAIB_PROM9</name>
<reference key="1">
    <citation type="journal article" date="2006" name="Science">
        <title>Genomic islands and the ecology and evolution of Prochlorococcus.</title>
        <authorList>
            <person name="Coleman M.L."/>
            <person name="Sullivan M.B."/>
            <person name="Martiny A.C."/>
            <person name="Steglich C."/>
            <person name="Barry K."/>
            <person name="Delong E.F."/>
            <person name="Chisholm S.W."/>
        </authorList>
    </citation>
    <scope>NUCLEOTIDE SEQUENCE [LARGE SCALE GENOMIC DNA]</scope>
    <source>
        <strain>MIT 9312</strain>
    </source>
</reference>
<accession>Q319E4</accession>
<proteinExistence type="inferred from homology"/>
<evidence type="ECO:0000255" key="1">
    <source>
        <dbReference type="HAMAP-Rule" id="MF_01835"/>
    </source>
</evidence>
<comment type="function">
    <text evidence="1">Component of the KaiBC clock protein complex, which constitutes the main circadian regulator in cyanobacteria; it may modify the ATPase activity of KaiC.</text>
</comment>
<comment type="function">
    <text evidence="1">May be a metamorphic protein which reversibly switches between an inactive tetrameric fold and a rare, thioredoxin-like monomeric fold (KaiB(fs)). KaiB(fs) binds phospho-KaiC, and perhaps clock output effectors.</text>
</comment>
<comment type="subunit">
    <text evidence="1">May undergo a major conformational rearrangment; in the free state forms homooligomers. When bound to KaiC switches to a monomeric thioredoxin-fold (KaiB(fs)). The active oscillator complex is probably KaiC(6):KaiB(6).</text>
</comment>
<comment type="domain">
    <text evidence="1">Has 2 forms, fold switches to a thioredoxin-like fold (KaiB(fs)) when bound to KaiC.</text>
</comment>
<comment type="miscellaneous">
    <text evidence="1">The kiaA gene has been eliminated from Prochlorococcus during genome streamlining. It has been suggested that the central oscillator in Prochlorococcus does not have to be as robust as in other cyanobacteria because the former live in specific niches of the Earth's oceans; they divide exactly once a day and at the same time. Thus gene loss and changes in kaiB function compared to other cyanobacteria, can occur.</text>
</comment>
<comment type="similarity">
    <text evidence="1">Belongs to the KaiB family.</text>
</comment>
<sequence length="105" mass="11828">MAARKTYILKLYVAGNTPNSMRALNTLREILENEFKGVYALKVIDVLKQPQLAEEDKILATPTLAKILPPPVRRIIGDLSDREKVLIGLDLLFDELTETEYSGDK</sequence>